<name>ILVD_LACLM</name>
<feature type="chain" id="PRO_1000089393" description="Dihydroxy-acid dehydratase">
    <location>
        <begin position="1"/>
        <end position="570"/>
    </location>
</feature>
<feature type="active site" description="Proton acceptor" evidence="1">
    <location>
        <position position="485"/>
    </location>
</feature>
<feature type="binding site" evidence="1">
    <location>
        <position position="61"/>
    </location>
    <ligand>
        <name>[2Fe-2S] cluster</name>
        <dbReference type="ChEBI" id="CHEBI:190135"/>
    </ligand>
</feature>
<feature type="binding site" evidence="1">
    <location>
        <position position="94"/>
    </location>
    <ligand>
        <name>Mg(2+)</name>
        <dbReference type="ChEBI" id="CHEBI:18420"/>
    </ligand>
</feature>
<feature type="binding site" evidence="1">
    <location>
        <position position="135"/>
    </location>
    <ligand>
        <name>[2Fe-2S] cluster</name>
        <dbReference type="ChEBI" id="CHEBI:190135"/>
    </ligand>
</feature>
<feature type="binding site" evidence="1">
    <location>
        <position position="136"/>
    </location>
    <ligand>
        <name>Mg(2+)</name>
        <dbReference type="ChEBI" id="CHEBI:18420"/>
    </ligand>
</feature>
<feature type="binding site" description="via carbamate group" evidence="1">
    <location>
        <position position="137"/>
    </location>
    <ligand>
        <name>Mg(2+)</name>
        <dbReference type="ChEBI" id="CHEBI:18420"/>
    </ligand>
</feature>
<feature type="binding site" evidence="1">
    <location>
        <position position="207"/>
    </location>
    <ligand>
        <name>[2Fe-2S] cluster</name>
        <dbReference type="ChEBI" id="CHEBI:190135"/>
    </ligand>
</feature>
<feature type="binding site" evidence="1">
    <location>
        <position position="459"/>
    </location>
    <ligand>
        <name>Mg(2+)</name>
        <dbReference type="ChEBI" id="CHEBI:18420"/>
    </ligand>
</feature>
<feature type="modified residue" description="N6-carboxylysine" evidence="1">
    <location>
        <position position="137"/>
    </location>
</feature>
<evidence type="ECO:0000255" key="1">
    <source>
        <dbReference type="HAMAP-Rule" id="MF_00012"/>
    </source>
</evidence>
<dbReference type="EC" id="4.2.1.9" evidence="1"/>
<dbReference type="EMBL" id="AM406671">
    <property type="protein sequence ID" value="CAL97873.1"/>
    <property type="molecule type" value="Genomic_DNA"/>
</dbReference>
<dbReference type="RefSeq" id="WP_011835159.1">
    <property type="nucleotide sequence ID" value="NC_009004.1"/>
</dbReference>
<dbReference type="SMR" id="A2RKQ9"/>
<dbReference type="STRING" id="416870.llmg_1280"/>
<dbReference type="KEGG" id="llm:llmg_1280"/>
<dbReference type="eggNOG" id="COG0129">
    <property type="taxonomic scope" value="Bacteria"/>
</dbReference>
<dbReference type="HOGENOM" id="CLU_014271_4_1_9"/>
<dbReference type="OrthoDB" id="9807077at2"/>
<dbReference type="PhylomeDB" id="A2RKQ9"/>
<dbReference type="UniPathway" id="UPA00047">
    <property type="reaction ID" value="UER00057"/>
</dbReference>
<dbReference type="UniPathway" id="UPA00049">
    <property type="reaction ID" value="UER00061"/>
</dbReference>
<dbReference type="Proteomes" id="UP000000364">
    <property type="component" value="Chromosome"/>
</dbReference>
<dbReference type="GO" id="GO:0051537">
    <property type="term" value="F:2 iron, 2 sulfur cluster binding"/>
    <property type="evidence" value="ECO:0007669"/>
    <property type="project" value="UniProtKB-UniRule"/>
</dbReference>
<dbReference type="GO" id="GO:0004160">
    <property type="term" value="F:dihydroxy-acid dehydratase activity"/>
    <property type="evidence" value="ECO:0007669"/>
    <property type="project" value="UniProtKB-UniRule"/>
</dbReference>
<dbReference type="GO" id="GO:0000287">
    <property type="term" value="F:magnesium ion binding"/>
    <property type="evidence" value="ECO:0007669"/>
    <property type="project" value="UniProtKB-UniRule"/>
</dbReference>
<dbReference type="GO" id="GO:0009097">
    <property type="term" value="P:isoleucine biosynthetic process"/>
    <property type="evidence" value="ECO:0007669"/>
    <property type="project" value="UniProtKB-UniRule"/>
</dbReference>
<dbReference type="GO" id="GO:0009099">
    <property type="term" value="P:L-valine biosynthetic process"/>
    <property type="evidence" value="ECO:0007669"/>
    <property type="project" value="UniProtKB-UniRule"/>
</dbReference>
<dbReference type="FunFam" id="3.50.30.80:FF:000001">
    <property type="entry name" value="Dihydroxy-acid dehydratase"/>
    <property type="match status" value="1"/>
</dbReference>
<dbReference type="Gene3D" id="3.50.30.80">
    <property type="entry name" value="IlvD/EDD C-terminal domain-like"/>
    <property type="match status" value="1"/>
</dbReference>
<dbReference type="HAMAP" id="MF_00012">
    <property type="entry name" value="IlvD"/>
    <property type="match status" value="1"/>
</dbReference>
<dbReference type="InterPro" id="IPR050165">
    <property type="entry name" value="DHAD_IlvD/Edd"/>
</dbReference>
<dbReference type="InterPro" id="IPR042096">
    <property type="entry name" value="Dihydro-acid_dehy_C"/>
</dbReference>
<dbReference type="InterPro" id="IPR004404">
    <property type="entry name" value="DihydroxyA_deHydtase"/>
</dbReference>
<dbReference type="InterPro" id="IPR020558">
    <property type="entry name" value="DiOHA_6PGluconate_deHydtase_CS"/>
</dbReference>
<dbReference type="InterPro" id="IPR056740">
    <property type="entry name" value="ILV_EDD_C"/>
</dbReference>
<dbReference type="InterPro" id="IPR000581">
    <property type="entry name" value="ILV_EDD_N"/>
</dbReference>
<dbReference type="InterPro" id="IPR037237">
    <property type="entry name" value="IlvD/EDD_N"/>
</dbReference>
<dbReference type="NCBIfam" id="TIGR00110">
    <property type="entry name" value="ilvD"/>
    <property type="match status" value="1"/>
</dbReference>
<dbReference type="NCBIfam" id="NF002068">
    <property type="entry name" value="PRK00911.1"/>
    <property type="match status" value="1"/>
</dbReference>
<dbReference type="PANTHER" id="PTHR21000">
    <property type="entry name" value="DIHYDROXY-ACID DEHYDRATASE DAD"/>
    <property type="match status" value="1"/>
</dbReference>
<dbReference type="PANTHER" id="PTHR21000:SF5">
    <property type="entry name" value="DIHYDROXY-ACID DEHYDRATASE, MITOCHONDRIAL"/>
    <property type="match status" value="1"/>
</dbReference>
<dbReference type="Pfam" id="PF24877">
    <property type="entry name" value="ILV_EDD_C"/>
    <property type="match status" value="1"/>
</dbReference>
<dbReference type="Pfam" id="PF00920">
    <property type="entry name" value="ILVD_EDD_N"/>
    <property type="match status" value="1"/>
</dbReference>
<dbReference type="SUPFAM" id="SSF143975">
    <property type="entry name" value="IlvD/EDD N-terminal domain-like"/>
    <property type="match status" value="1"/>
</dbReference>
<dbReference type="SUPFAM" id="SSF52016">
    <property type="entry name" value="LeuD/IlvD-like"/>
    <property type="match status" value="1"/>
</dbReference>
<dbReference type="PROSITE" id="PS00886">
    <property type="entry name" value="ILVD_EDD_1"/>
    <property type="match status" value="1"/>
</dbReference>
<dbReference type="PROSITE" id="PS00887">
    <property type="entry name" value="ILVD_EDD_2"/>
    <property type="match status" value="1"/>
</dbReference>
<reference key="1">
    <citation type="journal article" date="2007" name="J. Bacteriol.">
        <title>The complete genome sequence of the lactic acid bacterial paradigm Lactococcus lactis subsp. cremoris MG1363.</title>
        <authorList>
            <person name="Wegmann U."/>
            <person name="O'Connell-Motherway M."/>
            <person name="Zomer A."/>
            <person name="Buist G."/>
            <person name="Shearman C."/>
            <person name="Canchaya C."/>
            <person name="Ventura M."/>
            <person name="Goesmann A."/>
            <person name="Gasson M.J."/>
            <person name="Kuipers O.P."/>
            <person name="van Sinderen D."/>
            <person name="Kok J."/>
        </authorList>
    </citation>
    <scope>NUCLEOTIDE SEQUENCE [LARGE SCALE GENOMIC DNA]</scope>
    <source>
        <strain>MG1363</strain>
    </source>
</reference>
<organism>
    <name type="scientific">Lactococcus lactis subsp. cremoris (strain MG1363)</name>
    <dbReference type="NCBI Taxonomy" id="416870"/>
    <lineage>
        <taxon>Bacteria</taxon>
        <taxon>Bacillati</taxon>
        <taxon>Bacillota</taxon>
        <taxon>Bacilli</taxon>
        <taxon>Lactobacillales</taxon>
        <taxon>Streptococcaceae</taxon>
        <taxon>Lactococcus</taxon>
        <taxon>Lactococcus cremoris subsp. cremoris</taxon>
    </lineage>
</organism>
<protein>
    <recommendedName>
        <fullName evidence="1">Dihydroxy-acid dehydratase</fullName>
        <shortName evidence="1">DAD</shortName>
        <ecNumber evidence="1">4.2.1.9</ecNumber>
    </recommendedName>
</protein>
<comment type="function">
    <text evidence="1">Functions in the biosynthesis of branched-chain amino acids. Catalyzes the dehydration of (2R,3R)-2,3-dihydroxy-3-methylpentanoate (2,3-dihydroxy-3-methylvalerate) into 2-oxo-3-methylpentanoate (2-oxo-3-methylvalerate) and of (2R)-2,3-dihydroxy-3-methylbutanoate (2,3-dihydroxyisovalerate) into 2-oxo-3-methylbutanoate (2-oxoisovalerate), the penultimate precursor to L-isoleucine and L-valine, respectively.</text>
</comment>
<comment type="catalytic activity">
    <reaction evidence="1">
        <text>(2R)-2,3-dihydroxy-3-methylbutanoate = 3-methyl-2-oxobutanoate + H2O</text>
        <dbReference type="Rhea" id="RHEA:24809"/>
        <dbReference type="ChEBI" id="CHEBI:11851"/>
        <dbReference type="ChEBI" id="CHEBI:15377"/>
        <dbReference type="ChEBI" id="CHEBI:49072"/>
        <dbReference type="EC" id="4.2.1.9"/>
    </reaction>
    <physiologicalReaction direction="left-to-right" evidence="1">
        <dbReference type="Rhea" id="RHEA:24810"/>
    </physiologicalReaction>
</comment>
<comment type="catalytic activity">
    <reaction evidence="1">
        <text>(2R,3R)-2,3-dihydroxy-3-methylpentanoate = (S)-3-methyl-2-oxopentanoate + H2O</text>
        <dbReference type="Rhea" id="RHEA:27694"/>
        <dbReference type="ChEBI" id="CHEBI:15377"/>
        <dbReference type="ChEBI" id="CHEBI:35146"/>
        <dbReference type="ChEBI" id="CHEBI:49258"/>
        <dbReference type="EC" id="4.2.1.9"/>
    </reaction>
    <physiologicalReaction direction="left-to-right" evidence="1">
        <dbReference type="Rhea" id="RHEA:27695"/>
    </physiologicalReaction>
</comment>
<comment type="cofactor">
    <cofactor evidence="1">
        <name>[2Fe-2S] cluster</name>
        <dbReference type="ChEBI" id="CHEBI:190135"/>
    </cofactor>
    <text evidence="1">Binds 1 [2Fe-2S] cluster per subunit. This cluster acts as a Lewis acid cofactor.</text>
</comment>
<comment type="cofactor">
    <cofactor evidence="1">
        <name>Mg(2+)</name>
        <dbReference type="ChEBI" id="CHEBI:18420"/>
    </cofactor>
</comment>
<comment type="pathway">
    <text evidence="1">Amino-acid biosynthesis; L-isoleucine biosynthesis; L-isoleucine from 2-oxobutanoate: step 3/4.</text>
</comment>
<comment type="pathway">
    <text evidence="1">Amino-acid biosynthesis; L-valine biosynthesis; L-valine from pyruvate: step 3/4.</text>
</comment>
<comment type="subunit">
    <text evidence="1">Homodimer.</text>
</comment>
<comment type="similarity">
    <text evidence="1">Belongs to the IlvD/Edd family.</text>
</comment>
<accession>A2RKQ9</accession>
<gene>
    <name evidence="1" type="primary">ilvD</name>
    <name type="ordered locus">llmg_1280</name>
</gene>
<proteinExistence type="inferred from homology"/>
<keyword id="KW-0001">2Fe-2S</keyword>
<keyword id="KW-0028">Amino-acid biosynthesis</keyword>
<keyword id="KW-0100">Branched-chain amino acid biosynthesis</keyword>
<keyword id="KW-0408">Iron</keyword>
<keyword id="KW-0411">Iron-sulfur</keyword>
<keyword id="KW-0456">Lyase</keyword>
<keyword id="KW-0460">Magnesium</keyword>
<keyword id="KW-0479">Metal-binding</keyword>
<sequence>MEFKYNGKVESIELNKYSKTLTQDPTQPATQAMYYGIGFKDEDFKKAQVGIVSMDWDGNPCNMHLGTLGSKIKNSVNQTDGLIGLQFHTIGVSDGIANGKLGMRYSLVSREVIADSIETNAGAEYYDAIVAVPGCDKNMPGSIIGMARLNRPSIMVYGGTIEHGEYKGEKLNIVSAFEALGQKITGNISDEDYHGVICNAIPGQGACGGMYTANTLAAAIETLGMSLPYSSSNPAVSQEKEDECDEIGLAIKNLLEKDIKPSDIMTKEAFENAITIVMVLGGSTNAVLHIIAMANAIGVEITQDDFQRISDVTPVLGDFKPSGKYMVEDLHKIGGVPAVLKYLLKEGKLHGDCLTVTGKTLAENVKTALDLDFESQDIMRPLENPIKATGHLQILYGNLAEGGSVAKISGKEGEFFKGTARVFDGEQHFIDGIESGRLHAGDVAVIRNIGPVGGPGMPEMLKPTSALIGAGLGKSCALITDGRFSGGTHGFVVGHIVPEAVEGGLIGLVEDDDIIEIDAVNNSISLKVADDEIARRRANYQKPAPKATRGVLAKFAKLTRPASEGCVTDL</sequence>